<gene>
    <name evidence="5" type="primary">Macrod1</name>
    <name type="synonym">Lrp16</name>
</gene>
<name>MACD1_MOUSE</name>
<comment type="function">
    <text evidence="2">Removes ADP-ribose from aspartate and glutamate residues in proteins bearing a single ADP-ribose moiety. Inactive towards proteins bearing poly-ADP-ribose. Deacetylates O-acetyl-ADP ribose, a signaling molecule generated by the deacetylation of acetylated lysine residues in histones and other proteins. Plays a role in estrogen signaling. Binds to androgen receptor (AR) and amplifies the transactivation function of AR in response to androgen. May play an important role in carcinogenesis and/or progression of hormone-dependent cancers by feed-forward mechanism that activates ESR1 transactivation. Could be an ESR1 coactivator, providing a positive feedback regulatory loop for ESR1 signal transduction. Could be involved in invasive growth by down-regulating CDH1 in endometrial cancer cells. Enhances ESR1-mediated transcription activity.</text>
</comment>
<comment type="catalytic activity">
    <reaction evidence="2">
        <text>3''-O-acetyl-ADP-D-ribose + H2O = ADP-D-ribose + acetate + H(+)</text>
        <dbReference type="Rhea" id="RHEA:59244"/>
        <dbReference type="ChEBI" id="CHEBI:15377"/>
        <dbReference type="ChEBI" id="CHEBI:15378"/>
        <dbReference type="ChEBI" id="CHEBI:30089"/>
        <dbReference type="ChEBI" id="CHEBI:57967"/>
        <dbReference type="ChEBI" id="CHEBI:142723"/>
        <dbReference type="EC" id="3.1.1.106"/>
    </reaction>
</comment>
<comment type="catalytic activity">
    <reaction evidence="2">
        <text>2''-O-acetyl-ADP-D-ribose + H2O = ADP-D-ribose + acetate + H(+)</text>
        <dbReference type="Rhea" id="RHEA:57060"/>
        <dbReference type="ChEBI" id="CHEBI:15377"/>
        <dbReference type="ChEBI" id="CHEBI:15378"/>
        <dbReference type="ChEBI" id="CHEBI:30089"/>
        <dbReference type="ChEBI" id="CHEBI:57967"/>
        <dbReference type="ChEBI" id="CHEBI:83767"/>
        <dbReference type="EC" id="3.1.1.106"/>
    </reaction>
</comment>
<comment type="catalytic activity">
    <reaction evidence="2">
        <text>4-O-(ADP-D-ribosyl)-L-aspartyl-[protein] + H2O = L-aspartyl-[protein] + ADP-D-ribose + H(+)</text>
        <dbReference type="Rhea" id="RHEA:54428"/>
        <dbReference type="Rhea" id="RHEA-COMP:9867"/>
        <dbReference type="Rhea" id="RHEA-COMP:13832"/>
        <dbReference type="ChEBI" id="CHEBI:15377"/>
        <dbReference type="ChEBI" id="CHEBI:15378"/>
        <dbReference type="ChEBI" id="CHEBI:29961"/>
        <dbReference type="ChEBI" id="CHEBI:57967"/>
        <dbReference type="ChEBI" id="CHEBI:138102"/>
    </reaction>
</comment>
<comment type="catalytic activity">
    <reaction evidence="2">
        <text>5-O-(ADP-D-ribosyl)-L-glutamyl-[protein] + H2O = L-glutamyl-[protein] + ADP-D-ribose + H(+)</text>
        <dbReference type="Rhea" id="RHEA:58248"/>
        <dbReference type="Rhea" id="RHEA-COMP:10208"/>
        <dbReference type="Rhea" id="RHEA-COMP:15089"/>
        <dbReference type="ChEBI" id="CHEBI:15377"/>
        <dbReference type="ChEBI" id="CHEBI:15378"/>
        <dbReference type="ChEBI" id="CHEBI:29973"/>
        <dbReference type="ChEBI" id="CHEBI:57967"/>
        <dbReference type="ChEBI" id="CHEBI:142540"/>
    </reaction>
</comment>
<comment type="catalytic activity">
    <reaction evidence="2">
        <text>alpha-NAD(+) + H2O = ADP-D-ribose + nicotinamide + H(+)</text>
        <dbReference type="Rhea" id="RHEA:68792"/>
        <dbReference type="ChEBI" id="CHEBI:15377"/>
        <dbReference type="ChEBI" id="CHEBI:15378"/>
        <dbReference type="ChEBI" id="CHEBI:17154"/>
        <dbReference type="ChEBI" id="CHEBI:57967"/>
        <dbReference type="ChEBI" id="CHEBI:77017"/>
    </reaction>
</comment>
<comment type="activity regulation">
    <text evidence="2">Subject to competitive inhibition by the product ADP-ribose.</text>
</comment>
<comment type="subunit">
    <text evidence="2">Interacts with ESR1; Interacts in a manner that is estrogen independent but is enhanced by estrogen. Interacts (via macro domain) with AR.</text>
</comment>
<comment type="subcellular location">
    <subcellularLocation>
        <location evidence="2">Nucleus</location>
    </subcellularLocation>
    <text evidence="2">Recruited to DNA lesions, probably via mono-APD-ribosylated proteins.</text>
</comment>
<comment type="similarity">
    <text evidence="4">Belongs to the MacroD-type family. MacroD1/2-like subfamily.</text>
</comment>
<comment type="sequence caution" evidence="4">
    <conflict type="erroneous initiation">
        <sequence resource="EMBL-CDS" id="AAH08653"/>
    </conflict>
</comment>
<comment type="sequence caution" evidence="4">
    <conflict type="erroneous initiation">
        <sequence resource="EMBL-CDS" id="BAC35234"/>
    </conflict>
</comment>
<keyword id="KW-0007">Acetylation</keyword>
<keyword id="KW-0227">DNA damage</keyword>
<keyword id="KW-0378">Hydrolase</keyword>
<keyword id="KW-1017">Isopeptide bond</keyword>
<keyword id="KW-0539">Nucleus</keyword>
<keyword id="KW-1185">Reference proteome</keyword>
<keyword id="KW-0832">Ubl conjugation</keyword>
<protein>
    <recommendedName>
        <fullName evidence="4">ADP-ribose glycohydrolase MACROD1</fullName>
    </recommendedName>
    <alternativeName>
        <fullName>MACRO domain-containing protein 1</fullName>
    </alternativeName>
    <alternativeName>
        <fullName>O-acetyl-ADP-ribose deacetylase MACROD1</fullName>
        <ecNumber evidence="2">3.1.1.106</ecNumber>
    </alternativeName>
    <alternativeName>
        <fullName>Protein LRP16</fullName>
    </alternativeName>
    <alternativeName>
        <fullName evidence="4">[Protein ADP-ribosylaspartate] hydrolase MACROD1</fullName>
        <ecNumber evidence="2">3.2.2.-</ecNumber>
    </alternativeName>
    <alternativeName>
        <fullName evidence="4">[Protein ADP-ribosylglutamate] hydrolase MACROD1</fullName>
        <ecNumber evidence="2">3.2.2.-</ecNumber>
    </alternativeName>
</protein>
<reference key="1">
    <citation type="journal article" date="2005" name="Science">
        <title>The transcriptional landscape of the mammalian genome.</title>
        <authorList>
            <person name="Carninci P."/>
            <person name="Kasukawa T."/>
            <person name="Katayama S."/>
            <person name="Gough J."/>
            <person name="Frith M.C."/>
            <person name="Maeda N."/>
            <person name="Oyama R."/>
            <person name="Ravasi T."/>
            <person name="Lenhard B."/>
            <person name="Wells C."/>
            <person name="Kodzius R."/>
            <person name="Shimokawa K."/>
            <person name="Bajic V.B."/>
            <person name="Brenner S.E."/>
            <person name="Batalov S."/>
            <person name="Forrest A.R."/>
            <person name="Zavolan M."/>
            <person name="Davis M.J."/>
            <person name="Wilming L.G."/>
            <person name="Aidinis V."/>
            <person name="Allen J.E."/>
            <person name="Ambesi-Impiombato A."/>
            <person name="Apweiler R."/>
            <person name="Aturaliya R.N."/>
            <person name="Bailey T.L."/>
            <person name="Bansal M."/>
            <person name="Baxter L."/>
            <person name="Beisel K.W."/>
            <person name="Bersano T."/>
            <person name="Bono H."/>
            <person name="Chalk A.M."/>
            <person name="Chiu K.P."/>
            <person name="Choudhary V."/>
            <person name="Christoffels A."/>
            <person name="Clutterbuck D.R."/>
            <person name="Crowe M.L."/>
            <person name="Dalla E."/>
            <person name="Dalrymple B.P."/>
            <person name="de Bono B."/>
            <person name="Della Gatta G."/>
            <person name="di Bernardo D."/>
            <person name="Down T."/>
            <person name="Engstrom P."/>
            <person name="Fagiolini M."/>
            <person name="Faulkner G."/>
            <person name="Fletcher C.F."/>
            <person name="Fukushima T."/>
            <person name="Furuno M."/>
            <person name="Futaki S."/>
            <person name="Gariboldi M."/>
            <person name="Georgii-Hemming P."/>
            <person name="Gingeras T.R."/>
            <person name="Gojobori T."/>
            <person name="Green R.E."/>
            <person name="Gustincich S."/>
            <person name="Harbers M."/>
            <person name="Hayashi Y."/>
            <person name="Hensch T.K."/>
            <person name="Hirokawa N."/>
            <person name="Hill D."/>
            <person name="Huminiecki L."/>
            <person name="Iacono M."/>
            <person name="Ikeo K."/>
            <person name="Iwama A."/>
            <person name="Ishikawa T."/>
            <person name="Jakt M."/>
            <person name="Kanapin A."/>
            <person name="Katoh M."/>
            <person name="Kawasawa Y."/>
            <person name="Kelso J."/>
            <person name="Kitamura H."/>
            <person name="Kitano H."/>
            <person name="Kollias G."/>
            <person name="Krishnan S.P."/>
            <person name="Kruger A."/>
            <person name="Kummerfeld S.K."/>
            <person name="Kurochkin I.V."/>
            <person name="Lareau L.F."/>
            <person name="Lazarevic D."/>
            <person name="Lipovich L."/>
            <person name="Liu J."/>
            <person name="Liuni S."/>
            <person name="McWilliam S."/>
            <person name="Madan Babu M."/>
            <person name="Madera M."/>
            <person name="Marchionni L."/>
            <person name="Matsuda H."/>
            <person name="Matsuzawa S."/>
            <person name="Miki H."/>
            <person name="Mignone F."/>
            <person name="Miyake S."/>
            <person name="Morris K."/>
            <person name="Mottagui-Tabar S."/>
            <person name="Mulder N."/>
            <person name="Nakano N."/>
            <person name="Nakauchi H."/>
            <person name="Ng P."/>
            <person name="Nilsson R."/>
            <person name="Nishiguchi S."/>
            <person name="Nishikawa S."/>
            <person name="Nori F."/>
            <person name="Ohara O."/>
            <person name="Okazaki Y."/>
            <person name="Orlando V."/>
            <person name="Pang K.C."/>
            <person name="Pavan W.J."/>
            <person name="Pavesi G."/>
            <person name="Pesole G."/>
            <person name="Petrovsky N."/>
            <person name="Piazza S."/>
            <person name="Reed J."/>
            <person name="Reid J.F."/>
            <person name="Ring B.Z."/>
            <person name="Ringwald M."/>
            <person name="Rost B."/>
            <person name="Ruan Y."/>
            <person name="Salzberg S.L."/>
            <person name="Sandelin A."/>
            <person name="Schneider C."/>
            <person name="Schoenbach C."/>
            <person name="Sekiguchi K."/>
            <person name="Semple C.A."/>
            <person name="Seno S."/>
            <person name="Sessa L."/>
            <person name="Sheng Y."/>
            <person name="Shibata Y."/>
            <person name="Shimada H."/>
            <person name="Shimada K."/>
            <person name="Silva D."/>
            <person name="Sinclair B."/>
            <person name="Sperling S."/>
            <person name="Stupka E."/>
            <person name="Sugiura K."/>
            <person name="Sultana R."/>
            <person name="Takenaka Y."/>
            <person name="Taki K."/>
            <person name="Tammoja K."/>
            <person name="Tan S.L."/>
            <person name="Tang S."/>
            <person name="Taylor M.S."/>
            <person name="Tegner J."/>
            <person name="Teichmann S.A."/>
            <person name="Ueda H.R."/>
            <person name="van Nimwegen E."/>
            <person name="Verardo R."/>
            <person name="Wei C.L."/>
            <person name="Yagi K."/>
            <person name="Yamanishi H."/>
            <person name="Zabarovsky E."/>
            <person name="Zhu S."/>
            <person name="Zimmer A."/>
            <person name="Hide W."/>
            <person name="Bult C."/>
            <person name="Grimmond S.M."/>
            <person name="Teasdale R.D."/>
            <person name="Liu E.T."/>
            <person name="Brusic V."/>
            <person name="Quackenbush J."/>
            <person name="Wahlestedt C."/>
            <person name="Mattick J.S."/>
            <person name="Hume D.A."/>
            <person name="Kai C."/>
            <person name="Sasaki D."/>
            <person name="Tomaru Y."/>
            <person name="Fukuda S."/>
            <person name="Kanamori-Katayama M."/>
            <person name="Suzuki M."/>
            <person name="Aoki J."/>
            <person name="Arakawa T."/>
            <person name="Iida J."/>
            <person name="Imamura K."/>
            <person name="Itoh M."/>
            <person name="Kato T."/>
            <person name="Kawaji H."/>
            <person name="Kawagashira N."/>
            <person name="Kawashima T."/>
            <person name="Kojima M."/>
            <person name="Kondo S."/>
            <person name="Konno H."/>
            <person name="Nakano K."/>
            <person name="Ninomiya N."/>
            <person name="Nishio T."/>
            <person name="Okada M."/>
            <person name="Plessy C."/>
            <person name="Shibata K."/>
            <person name="Shiraki T."/>
            <person name="Suzuki S."/>
            <person name="Tagami M."/>
            <person name="Waki K."/>
            <person name="Watahiki A."/>
            <person name="Okamura-Oho Y."/>
            <person name="Suzuki H."/>
            <person name="Kawai J."/>
            <person name="Hayashizaki Y."/>
        </authorList>
    </citation>
    <scope>NUCLEOTIDE SEQUENCE [LARGE SCALE MRNA]</scope>
    <source>
        <strain>C57BL/6J</strain>
        <tissue>Head</tissue>
    </source>
</reference>
<reference key="2">
    <citation type="journal article" date="2004" name="Genome Res.">
        <title>The status, quality, and expansion of the NIH full-length cDNA project: the Mammalian Gene Collection (MGC).</title>
        <authorList>
            <consortium name="The MGC Project Team"/>
        </authorList>
    </citation>
    <scope>NUCLEOTIDE SEQUENCE [LARGE SCALE MRNA] OF 52-323</scope>
    <source>
        <tissue>Mammary tumor</tissue>
    </source>
</reference>
<reference key="3">
    <citation type="journal article" date="2010" name="Cell">
        <title>A tissue-specific atlas of mouse protein phosphorylation and expression.</title>
        <authorList>
            <person name="Huttlin E.L."/>
            <person name="Jedrychowski M.P."/>
            <person name="Elias J.E."/>
            <person name="Goswami T."/>
            <person name="Rad R."/>
            <person name="Beausoleil S.A."/>
            <person name="Villen J."/>
            <person name="Haas W."/>
            <person name="Sowa M.E."/>
            <person name="Gygi S.P."/>
        </authorList>
    </citation>
    <scope>IDENTIFICATION BY MASS SPECTROMETRY [LARGE SCALE ANALYSIS]</scope>
    <source>
        <tissue>Brain</tissue>
        <tissue>Brown adipose tissue</tissue>
        <tissue>Heart</tissue>
        <tissue>Kidney</tissue>
        <tissue>Liver</tissue>
        <tissue>Lung</tissue>
        <tissue>Pancreas</tissue>
        <tissue>Testis</tissue>
    </source>
</reference>
<reference key="4">
    <citation type="journal article" date="2013" name="Mol. Cell">
        <title>SIRT5-mediated lysine desuccinylation impacts diverse metabolic pathways.</title>
        <authorList>
            <person name="Park J."/>
            <person name="Chen Y."/>
            <person name="Tishkoff D.X."/>
            <person name="Peng C."/>
            <person name="Tan M."/>
            <person name="Dai L."/>
            <person name="Xie Z."/>
            <person name="Zhang Y."/>
            <person name="Zwaans B.M."/>
            <person name="Skinner M.E."/>
            <person name="Lombard D.B."/>
            <person name="Zhao Y."/>
        </authorList>
    </citation>
    <scope>SUCCINYLATION [LARGE SCALE ANALYSIS] AT LYS-94; LYS-101 AND LYS-127</scope>
    <scope>IDENTIFICATION BY MASS SPECTROMETRY [LARGE SCALE ANALYSIS]</scope>
    <source>
        <tissue>Liver</tissue>
    </source>
</reference>
<reference key="5">
    <citation type="journal article" date="2013" name="Proc. Natl. Acad. Sci. U.S.A.">
        <title>Label-free quantitative proteomics of the lysine acetylome in mitochondria identifies substrates of SIRT3 in metabolic pathways.</title>
        <authorList>
            <person name="Rardin M.J."/>
            <person name="Newman J.C."/>
            <person name="Held J.M."/>
            <person name="Cusack M.P."/>
            <person name="Sorensen D.J."/>
            <person name="Li B."/>
            <person name="Schilling B."/>
            <person name="Mooney S.D."/>
            <person name="Kahn C.R."/>
            <person name="Verdin E."/>
            <person name="Gibson B.W."/>
        </authorList>
    </citation>
    <scope>ACETYLATION [LARGE SCALE ANALYSIS] AT LYS-161</scope>
    <scope>IDENTIFICATION BY MASS SPECTROMETRY [LARGE SCALE ANALYSIS]</scope>
    <source>
        <tissue>Liver</tissue>
    </source>
</reference>
<feature type="chain" id="PRO_0000084486" description="ADP-ribose glycohydrolase MACROD1">
    <location>
        <begin position="1"/>
        <end position="323"/>
    </location>
</feature>
<feature type="domain" description="Macro" evidence="3">
    <location>
        <begin position="139"/>
        <end position="320"/>
    </location>
</feature>
<feature type="binding site" evidence="1">
    <location>
        <begin position="157"/>
        <end position="159"/>
    </location>
    <ligand>
        <name>substrate</name>
    </ligand>
</feature>
<feature type="binding site" evidence="1">
    <location>
        <begin position="170"/>
        <end position="172"/>
    </location>
    <ligand>
        <name>substrate</name>
    </ligand>
</feature>
<feature type="binding site" evidence="1">
    <location>
        <begin position="177"/>
        <end position="182"/>
    </location>
    <ligand>
        <name>substrate</name>
    </ligand>
</feature>
<feature type="binding site" evidence="1">
    <location>
        <begin position="265"/>
        <end position="271"/>
    </location>
    <ligand>
        <name>substrate</name>
    </ligand>
</feature>
<feature type="binding site" evidence="1">
    <location>
        <position position="304"/>
    </location>
    <ligand>
        <name>substrate</name>
    </ligand>
</feature>
<feature type="modified residue" description="N6-succinyllysine" evidence="7">
    <location>
        <position position="94"/>
    </location>
</feature>
<feature type="modified residue" description="N6-succinyllysine" evidence="7">
    <location>
        <position position="101"/>
    </location>
</feature>
<feature type="modified residue" description="N6-succinyllysine" evidence="7">
    <location>
        <position position="127"/>
    </location>
</feature>
<feature type="modified residue" description="N6-acetyllysine" evidence="6">
    <location>
        <position position="161"/>
    </location>
</feature>
<feature type="cross-link" description="Glycyl lysine isopeptide (Lys-Gly) (interchain with G-Cter in SUMO2)" evidence="2">
    <location>
        <position position="136"/>
    </location>
</feature>
<evidence type="ECO:0000250" key="1">
    <source>
        <dbReference type="UniProtKB" id="A1Z1Q3"/>
    </source>
</evidence>
<evidence type="ECO:0000250" key="2">
    <source>
        <dbReference type="UniProtKB" id="Q9BQ69"/>
    </source>
</evidence>
<evidence type="ECO:0000255" key="3">
    <source>
        <dbReference type="PROSITE-ProRule" id="PRU00490"/>
    </source>
</evidence>
<evidence type="ECO:0000305" key="4"/>
<evidence type="ECO:0000312" key="5">
    <source>
        <dbReference type="MGI" id="MGI:2147583"/>
    </source>
</evidence>
<evidence type="ECO:0007744" key="6">
    <source>
    </source>
</evidence>
<evidence type="ECO:0007744" key="7">
    <source>
    </source>
</evidence>
<accession>Q922B1</accession>
<proteinExistence type="evidence at protein level"/>
<sequence length="323" mass="35295">MSLQSQVSGRLAQLRAAGQLLVSLRPWPGRSAGGPRPRGSACGPLVALGEHGYCAWLSAGVGAWGAAGRGAWVRTWAPLAMAAKVDLSTSTDWKEAKSFLKGLSDKQREEHYFCKDFIKLKKIPTWKETAKGLAVKVEDPKYKKDKQLNEKISLYRGDITKLEVDAIVNAANSSLLGGGGVDGCIHRAAGSLLTDECRTLQNCETGKAKITCGYRLPAKYVIHTVGPIAVGQPTASQAAELRSCYLSSLDLLLEHRLRSVAFPCISTGVFGYPNEEAAEVVLASLREWLEQHKDKVDRLIICVFLEKDEGIYRERLPHYFPVA</sequence>
<organism>
    <name type="scientific">Mus musculus</name>
    <name type="common">Mouse</name>
    <dbReference type="NCBI Taxonomy" id="10090"/>
    <lineage>
        <taxon>Eukaryota</taxon>
        <taxon>Metazoa</taxon>
        <taxon>Chordata</taxon>
        <taxon>Craniata</taxon>
        <taxon>Vertebrata</taxon>
        <taxon>Euteleostomi</taxon>
        <taxon>Mammalia</taxon>
        <taxon>Eutheria</taxon>
        <taxon>Euarchontoglires</taxon>
        <taxon>Glires</taxon>
        <taxon>Rodentia</taxon>
        <taxon>Myomorpha</taxon>
        <taxon>Muroidea</taxon>
        <taxon>Muridae</taxon>
        <taxon>Murinae</taxon>
        <taxon>Mus</taxon>
        <taxon>Mus</taxon>
    </lineage>
</organism>
<dbReference type="EC" id="3.1.1.106" evidence="2"/>
<dbReference type="EC" id="3.2.2.-" evidence="2"/>
<dbReference type="EMBL" id="AK052998">
    <property type="protein sequence ID" value="BAC35234.1"/>
    <property type="status" value="ALT_INIT"/>
    <property type="molecule type" value="mRNA"/>
</dbReference>
<dbReference type="EMBL" id="BC008653">
    <property type="protein sequence ID" value="AAH08653.1"/>
    <property type="status" value="ALT_INIT"/>
    <property type="molecule type" value="mRNA"/>
</dbReference>
<dbReference type="CCDS" id="CCDS50376.1"/>
<dbReference type="RefSeq" id="NP_598908.2">
    <property type="nucleotide sequence ID" value="NM_134147.5"/>
</dbReference>
<dbReference type="SMR" id="Q922B1"/>
<dbReference type="BioGRID" id="223219">
    <property type="interactions" value="7"/>
</dbReference>
<dbReference type="FunCoup" id="Q922B1">
    <property type="interactions" value="1934"/>
</dbReference>
<dbReference type="IntAct" id="Q922B1">
    <property type="interactions" value="1"/>
</dbReference>
<dbReference type="MINT" id="Q922B1"/>
<dbReference type="STRING" id="10090.ENSMUSP00000039507"/>
<dbReference type="GlyGen" id="Q922B1">
    <property type="glycosylation" value="1 site, 1 O-linked glycan (1 site)"/>
</dbReference>
<dbReference type="iPTMnet" id="Q922B1"/>
<dbReference type="PhosphoSitePlus" id="Q922B1"/>
<dbReference type="SwissPalm" id="Q922B1"/>
<dbReference type="jPOST" id="Q922B1"/>
<dbReference type="PaxDb" id="10090-ENSMUSP00000039507"/>
<dbReference type="PeptideAtlas" id="Q922B1"/>
<dbReference type="ProteomicsDB" id="291993"/>
<dbReference type="Pumba" id="Q922B1"/>
<dbReference type="Antibodypedia" id="51757">
    <property type="antibodies" value="50 antibodies from 11 providers"/>
</dbReference>
<dbReference type="DNASU" id="107227"/>
<dbReference type="Ensembl" id="ENSMUST00000040261.7">
    <property type="protein sequence ID" value="ENSMUSP00000039507.6"/>
    <property type="gene ID" value="ENSMUSG00000036278.8"/>
</dbReference>
<dbReference type="GeneID" id="107227"/>
<dbReference type="KEGG" id="mmu:107227"/>
<dbReference type="UCSC" id="uc008gkg.2">
    <property type="organism name" value="mouse"/>
</dbReference>
<dbReference type="AGR" id="MGI:2147583"/>
<dbReference type="CTD" id="28992"/>
<dbReference type="MGI" id="MGI:2147583">
    <property type="gene designation" value="Macrod1"/>
</dbReference>
<dbReference type="VEuPathDB" id="HostDB:ENSMUSG00000036278"/>
<dbReference type="eggNOG" id="KOG2633">
    <property type="taxonomic scope" value="Eukaryota"/>
</dbReference>
<dbReference type="GeneTree" id="ENSGT00940000161450"/>
<dbReference type="HOGENOM" id="CLU_046550_4_1_1"/>
<dbReference type="InParanoid" id="Q922B1"/>
<dbReference type="OMA" id="GYPNENA"/>
<dbReference type="OrthoDB" id="6133115at2759"/>
<dbReference type="PhylomeDB" id="Q922B1"/>
<dbReference type="TreeFam" id="TF341440"/>
<dbReference type="BRENDA" id="3.1.1.106">
    <property type="organism ID" value="3474"/>
</dbReference>
<dbReference type="BioGRID-ORCS" id="107227">
    <property type="hits" value="0 hits in 77 CRISPR screens"/>
</dbReference>
<dbReference type="ChiTaRS" id="Macrod1">
    <property type="organism name" value="mouse"/>
</dbReference>
<dbReference type="PRO" id="PR:Q922B1"/>
<dbReference type="Proteomes" id="UP000000589">
    <property type="component" value="Chromosome 19"/>
</dbReference>
<dbReference type="RNAct" id="Q922B1">
    <property type="molecule type" value="protein"/>
</dbReference>
<dbReference type="Bgee" id="ENSMUSG00000036278">
    <property type="expression patterns" value="Expressed in interventricular septum and 225 other cell types or tissues"/>
</dbReference>
<dbReference type="GO" id="GO:0005739">
    <property type="term" value="C:mitochondrion"/>
    <property type="evidence" value="ECO:0007005"/>
    <property type="project" value="MGI"/>
</dbReference>
<dbReference type="GO" id="GO:0005654">
    <property type="term" value="C:nucleoplasm"/>
    <property type="evidence" value="ECO:0007669"/>
    <property type="project" value="Ensembl"/>
</dbReference>
<dbReference type="GO" id="GO:0005634">
    <property type="term" value="C:nucleus"/>
    <property type="evidence" value="ECO:0000250"/>
    <property type="project" value="UniProtKB"/>
</dbReference>
<dbReference type="GO" id="GO:0140293">
    <property type="term" value="F:ADP-ribosylglutamate hydrolase activity"/>
    <property type="evidence" value="ECO:0000250"/>
    <property type="project" value="UniProtKB"/>
</dbReference>
<dbReference type="GO" id="GO:0016798">
    <property type="term" value="F:hydrolase activity, acting on glycosyl bonds"/>
    <property type="evidence" value="ECO:0000250"/>
    <property type="project" value="UniProtKB"/>
</dbReference>
<dbReference type="GO" id="GO:0061463">
    <property type="term" value="F:O-acetyl-ADP-ribose deacetylase activity"/>
    <property type="evidence" value="ECO:0007669"/>
    <property type="project" value="UniProtKB-EC"/>
</dbReference>
<dbReference type="GO" id="GO:0006974">
    <property type="term" value="P:DNA damage response"/>
    <property type="evidence" value="ECO:0000250"/>
    <property type="project" value="UniProtKB"/>
</dbReference>
<dbReference type="GO" id="GO:0140291">
    <property type="term" value="P:peptidyl-glutamate ADP-deribosylation"/>
    <property type="evidence" value="ECO:0000250"/>
    <property type="project" value="UniProtKB"/>
</dbReference>
<dbReference type="GO" id="GO:0051725">
    <property type="term" value="P:protein de-ADP-ribosylation"/>
    <property type="evidence" value="ECO:0000250"/>
    <property type="project" value="UniProtKB"/>
</dbReference>
<dbReference type="GO" id="GO:0042278">
    <property type="term" value="P:purine nucleoside metabolic process"/>
    <property type="evidence" value="ECO:0007669"/>
    <property type="project" value="Ensembl"/>
</dbReference>
<dbReference type="CDD" id="cd02908">
    <property type="entry name" value="Macro_OAADPr_deacetylase"/>
    <property type="match status" value="1"/>
</dbReference>
<dbReference type="FunFam" id="3.40.220.10:FF:000003">
    <property type="entry name" value="O-acetyl-ADP-ribose deacetylase MACROD2"/>
    <property type="match status" value="1"/>
</dbReference>
<dbReference type="Gene3D" id="3.40.220.10">
    <property type="entry name" value="Leucine Aminopeptidase, subunit E, domain 1"/>
    <property type="match status" value="1"/>
</dbReference>
<dbReference type="InterPro" id="IPR002589">
    <property type="entry name" value="Macro_dom"/>
</dbReference>
<dbReference type="InterPro" id="IPR043472">
    <property type="entry name" value="Macro_dom-like"/>
</dbReference>
<dbReference type="PANTHER" id="PTHR11106:SF93">
    <property type="entry name" value="ADP-RIBOSE GLYCOHYDROLASE MACROD1"/>
    <property type="match status" value="1"/>
</dbReference>
<dbReference type="PANTHER" id="PTHR11106">
    <property type="entry name" value="GANGLIOSIDE INDUCED DIFFERENTIATION ASSOCIATED PROTEIN 2-RELATED"/>
    <property type="match status" value="1"/>
</dbReference>
<dbReference type="Pfam" id="PF01661">
    <property type="entry name" value="Macro"/>
    <property type="match status" value="1"/>
</dbReference>
<dbReference type="SMART" id="SM00506">
    <property type="entry name" value="A1pp"/>
    <property type="match status" value="1"/>
</dbReference>
<dbReference type="SUPFAM" id="SSF52949">
    <property type="entry name" value="Macro domain-like"/>
    <property type="match status" value="1"/>
</dbReference>
<dbReference type="PROSITE" id="PS51154">
    <property type="entry name" value="MACRO"/>
    <property type="match status" value="1"/>
</dbReference>